<protein>
    <recommendedName>
        <fullName evidence="1">Ribosomal RNA small subunit methyltransferase H</fullName>
        <ecNumber evidence="1">2.1.1.199</ecNumber>
    </recommendedName>
    <alternativeName>
        <fullName evidence="1">16S rRNA m(4)C1402 methyltransferase</fullName>
    </alternativeName>
    <alternativeName>
        <fullName evidence="1">rRNA (cytosine-N(4)-)-methyltransferase RsmH</fullName>
    </alternativeName>
</protein>
<name>RSMH_BORPD</name>
<accession>A9I4S5</accession>
<dbReference type="EC" id="2.1.1.199" evidence="1"/>
<dbReference type="EMBL" id="AM902716">
    <property type="protein sequence ID" value="CAP41022.1"/>
    <property type="molecule type" value="Genomic_DNA"/>
</dbReference>
<dbReference type="SMR" id="A9I4S5"/>
<dbReference type="STRING" id="94624.Bpet0690"/>
<dbReference type="KEGG" id="bpt:Bpet0690"/>
<dbReference type="eggNOG" id="COG0275">
    <property type="taxonomic scope" value="Bacteria"/>
</dbReference>
<dbReference type="Proteomes" id="UP000001225">
    <property type="component" value="Chromosome"/>
</dbReference>
<dbReference type="GO" id="GO:0005737">
    <property type="term" value="C:cytoplasm"/>
    <property type="evidence" value="ECO:0007669"/>
    <property type="project" value="UniProtKB-SubCell"/>
</dbReference>
<dbReference type="GO" id="GO:0071424">
    <property type="term" value="F:rRNA (cytosine-N4-)-methyltransferase activity"/>
    <property type="evidence" value="ECO:0007669"/>
    <property type="project" value="UniProtKB-UniRule"/>
</dbReference>
<dbReference type="GO" id="GO:0070475">
    <property type="term" value="P:rRNA base methylation"/>
    <property type="evidence" value="ECO:0007669"/>
    <property type="project" value="UniProtKB-UniRule"/>
</dbReference>
<dbReference type="Gene3D" id="1.10.150.170">
    <property type="entry name" value="Putative methyltransferase TM0872, insert domain"/>
    <property type="match status" value="1"/>
</dbReference>
<dbReference type="Gene3D" id="3.40.50.150">
    <property type="entry name" value="Vaccinia Virus protein VP39"/>
    <property type="match status" value="1"/>
</dbReference>
<dbReference type="HAMAP" id="MF_01007">
    <property type="entry name" value="16SrRNA_methyltr_H"/>
    <property type="match status" value="1"/>
</dbReference>
<dbReference type="InterPro" id="IPR002903">
    <property type="entry name" value="RsmH"/>
</dbReference>
<dbReference type="InterPro" id="IPR023397">
    <property type="entry name" value="SAM-dep_MeTrfase_MraW_recog"/>
</dbReference>
<dbReference type="InterPro" id="IPR029063">
    <property type="entry name" value="SAM-dependent_MTases_sf"/>
</dbReference>
<dbReference type="NCBIfam" id="TIGR00006">
    <property type="entry name" value="16S rRNA (cytosine(1402)-N(4))-methyltransferase RsmH"/>
    <property type="match status" value="1"/>
</dbReference>
<dbReference type="PANTHER" id="PTHR11265:SF0">
    <property type="entry name" value="12S RRNA N4-METHYLCYTIDINE METHYLTRANSFERASE"/>
    <property type="match status" value="1"/>
</dbReference>
<dbReference type="PANTHER" id="PTHR11265">
    <property type="entry name" value="S-ADENOSYL-METHYLTRANSFERASE MRAW"/>
    <property type="match status" value="1"/>
</dbReference>
<dbReference type="Pfam" id="PF01795">
    <property type="entry name" value="Methyltransf_5"/>
    <property type="match status" value="1"/>
</dbReference>
<dbReference type="PIRSF" id="PIRSF004486">
    <property type="entry name" value="MraW"/>
    <property type="match status" value="1"/>
</dbReference>
<dbReference type="SUPFAM" id="SSF81799">
    <property type="entry name" value="Putative methyltransferase TM0872, insert domain"/>
    <property type="match status" value="1"/>
</dbReference>
<dbReference type="SUPFAM" id="SSF53335">
    <property type="entry name" value="S-adenosyl-L-methionine-dependent methyltransferases"/>
    <property type="match status" value="1"/>
</dbReference>
<organism>
    <name type="scientific">Bordetella petrii (strain ATCC BAA-461 / DSM 12804 / CCUG 43448)</name>
    <dbReference type="NCBI Taxonomy" id="340100"/>
    <lineage>
        <taxon>Bacteria</taxon>
        <taxon>Pseudomonadati</taxon>
        <taxon>Pseudomonadota</taxon>
        <taxon>Betaproteobacteria</taxon>
        <taxon>Burkholderiales</taxon>
        <taxon>Alcaligenaceae</taxon>
        <taxon>Bordetella</taxon>
    </lineage>
</organism>
<sequence>MEFEHRPVLLAPTVDALLLADFAGKGAARSGRQDGAQADARAQRGVFVDGTFGRGGHSRELLRRLGPEARLVVFDKDPQAIAVANELAAGDARVTVVHGGFAAMREELAARGIESIDGVMLDLGVSSPQLDDAGRGFSFMREGPLDMRMDTTRGPTVADWLAQASVDEMREVIADYGEERFAFQVAKAIAARRATRPLRTTLELAECVASAVRTREKGQHPATRTFQALRIYINRELEELSRALASALELLAPGGRLAVISFHSLEDRMVKQCIAAAARPAVAHARLPLRESELPQPLYRSLGRVQADDEEIAGNARARSAVLRVAERTTEPLGADGAAAFVPAMRVPGEAAPARRGARRRPH</sequence>
<proteinExistence type="inferred from homology"/>
<keyword id="KW-0963">Cytoplasm</keyword>
<keyword id="KW-0489">Methyltransferase</keyword>
<keyword id="KW-0698">rRNA processing</keyword>
<keyword id="KW-0949">S-adenosyl-L-methionine</keyword>
<keyword id="KW-0808">Transferase</keyword>
<gene>
    <name evidence="1" type="primary">rsmH</name>
    <name type="synonym">mraW</name>
    <name type="ordered locus">Bpet0690</name>
</gene>
<comment type="function">
    <text evidence="1">Specifically methylates the N4 position of cytidine in position 1402 (C1402) of 16S rRNA.</text>
</comment>
<comment type="catalytic activity">
    <reaction evidence="1">
        <text>cytidine(1402) in 16S rRNA + S-adenosyl-L-methionine = N(4)-methylcytidine(1402) in 16S rRNA + S-adenosyl-L-homocysteine + H(+)</text>
        <dbReference type="Rhea" id="RHEA:42928"/>
        <dbReference type="Rhea" id="RHEA-COMP:10286"/>
        <dbReference type="Rhea" id="RHEA-COMP:10287"/>
        <dbReference type="ChEBI" id="CHEBI:15378"/>
        <dbReference type="ChEBI" id="CHEBI:57856"/>
        <dbReference type="ChEBI" id="CHEBI:59789"/>
        <dbReference type="ChEBI" id="CHEBI:74506"/>
        <dbReference type="ChEBI" id="CHEBI:82748"/>
        <dbReference type="EC" id="2.1.1.199"/>
    </reaction>
</comment>
<comment type="subcellular location">
    <subcellularLocation>
        <location evidence="1">Cytoplasm</location>
    </subcellularLocation>
</comment>
<comment type="similarity">
    <text evidence="1">Belongs to the methyltransferase superfamily. RsmH family.</text>
</comment>
<feature type="chain" id="PRO_0000386752" description="Ribosomal RNA small subunit methyltransferase H">
    <location>
        <begin position="1"/>
        <end position="363"/>
    </location>
</feature>
<feature type="binding site" evidence="1">
    <location>
        <begin position="55"/>
        <end position="57"/>
    </location>
    <ligand>
        <name>S-adenosyl-L-methionine</name>
        <dbReference type="ChEBI" id="CHEBI:59789"/>
    </ligand>
</feature>
<feature type="binding site" evidence="1">
    <location>
        <position position="75"/>
    </location>
    <ligand>
        <name>S-adenosyl-L-methionine</name>
        <dbReference type="ChEBI" id="CHEBI:59789"/>
    </ligand>
</feature>
<feature type="binding site" evidence="1">
    <location>
        <position position="122"/>
    </location>
    <ligand>
        <name>S-adenosyl-L-methionine</name>
        <dbReference type="ChEBI" id="CHEBI:59789"/>
    </ligand>
</feature>
<feature type="binding site" evidence="1">
    <location>
        <position position="129"/>
    </location>
    <ligand>
        <name>S-adenosyl-L-methionine</name>
        <dbReference type="ChEBI" id="CHEBI:59789"/>
    </ligand>
</feature>
<reference key="1">
    <citation type="journal article" date="2008" name="BMC Genomics">
        <title>The missing link: Bordetella petrii is endowed with both the metabolic versatility of environmental bacteria and virulence traits of pathogenic Bordetellae.</title>
        <authorList>
            <person name="Gross R."/>
            <person name="Guzman C.A."/>
            <person name="Sebaihia M."/>
            <person name="Martin dos Santos V.A.P."/>
            <person name="Pieper D.H."/>
            <person name="Koebnik R."/>
            <person name="Lechner M."/>
            <person name="Bartels D."/>
            <person name="Buhrmester J."/>
            <person name="Choudhuri J.V."/>
            <person name="Ebensen T."/>
            <person name="Gaigalat L."/>
            <person name="Herrmann S."/>
            <person name="Khachane A.N."/>
            <person name="Larisch C."/>
            <person name="Link S."/>
            <person name="Linke B."/>
            <person name="Meyer F."/>
            <person name="Mormann S."/>
            <person name="Nakunst D."/>
            <person name="Rueckert C."/>
            <person name="Schneiker-Bekel S."/>
            <person name="Schulze K."/>
            <person name="Voerholter F.-J."/>
            <person name="Yevsa T."/>
            <person name="Engle J.T."/>
            <person name="Goldman W.E."/>
            <person name="Puehler A."/>
            <person name="Goebel U.B."/>
            <person name="Goesmann A."/>
            <person name="Bloecker H."/>
            <person name="Kaiser O."/>
            <person name="Martinez-Arias R."/>
        </authorList>
    </citation>
    <scope>NUCLEOTIDE SEQUENCE [LARGE SCALE GENOMIC DNA]</scope>
    <source>
        <strain>ATCC BAA-461 / DSM 12804 / CCUG 43448</strain>
    </source>
</reference>
<evidence type="ECO:0000255" key="1">
    <source>
        <dbReference type="HAMAP-Rule" id="MF_01007"/>
    </source>
</evidence>